<reference key="1">
    <citation type="journal article" date="1998" name="Med. Mycol.">
        <title>The identification and phylogenetic relationship of pathogenic species of Aspergillus based on the mitochondrial cytochrome b gene.</title>
        <authorList>
            <person name="Wang L."/>
            <person name="Yokoyama K."/>
            <person name="Miyaji M."/>
            <person name="Nishimura K."/>
        </authorList>
    </citation>
    <scope>NUCLEOTIDE SEQUENCE [GENOMIC DNA]</scope>
    <source>
        <strain>IFM 40850</strain>
        <strain>IFM 40851</strain>
        <strain>IFM 40852</strain>
        <strain>IFM 41092</strain>
        <strain>IFM 5372</strain>
    </source>
</reference>
<reference key="2">
    <citation type="submission" date="1999-03" db="EMBL/GenBank/DDBJ databases">
        <title>Cytochrome b gene.</title>
        <authorList>
            <person name="Wang L."/>
            <person name="Yokoyama K."/>
        </authorList>
    </citation>
    <scope>NUCLEOTIDE SEQUENCE [GENOMIC DNA] OF 8-140</scope>
    <source>
        <strain>ATCC 1012 / NRRL 255 / CBS 601.65 / IFM 47796</strain>
    </source>
</reference>
<accession>P56631</accession>
<accession>Q7YGS1</accession>
<feature type="chain" id="PRO_0000061738" description="Cytochrome b">
    <location>
        <begin position="1" status="less than"/>
        <end position="140" status="greater than"/>
    </location>
</feature>
<feature type="transmembrane region" description="Helical" evidence="3">
    <location>
        <begin position="38"/>
        <end position="58"/>
    </location>
</feature>
<feature type="transmembrane region" description="Helical" evidence="3">
    <location>
        <begin position="85"/>
        <end position="105"/>
    </location>
</feature>
<feature type="binding site" description="axial binding residue" evidence="5">
    <location>
        <position position="42"/>
    </location>
    <ligand>
        <name>heme b</name>
        <dbReference type="ChEBI" id="CHEBI:60344"/>
        <label>b562</label>
    </ligand>
    <ligandPart>
        <name>Fe</name>
        <dbReference type="ChEBI" id="CHEBI:18248"/>
    </ligandPart>
</feature>
<feature type="binding site" description="axial binding residue" evidence="5">
    <location>
        <position position="56"/>
    </location>
    <ligand>
        <name>heme b</name>
        <dbReference type="ChEBI" id="CHEBI:60344"/>
        <label>b566</label>
    </ligand>
    <ligandPart>
        <name>Fe</name>
        <dbReference type="ChEBI" id="CHEBI:18248"/>
    </ligandPart>
</feature>
<feature type="binding site" evidence="2">
    <location>
        <position position="61"/>
    </location>
    <ligand>
        <name>a ubiquinone</name>
        <dbReference type="ChEBI" id="CHEBI:16389"/>
    </ligand>
</feature>
<feature type="non-terminal residue">
    <location>
        <position position="1"/>
    </location>
</feature>
<feature type="non-terminal residue">
    <location>
        <position position="140"/>
    </location>
</feature>
<comment type="function">
    <text evidence="3">Component of the ubiquinol-cytochrome c reductase complex (complex III or cytochrome b-c1 complex) that is part of the mitochondrial respiratory chain. The b-c1 complex mediates electron transfer from ubiquinol to cytochrome c. Contributes to the generation of a proton gradient across the mitochondrial membrane that is then used for ATP synthesis.</text>
</comment>
<comment type="cofactor">
    <cofactor evidence="3">
        <name>heme b</name>
        <dbReference type="ChEBI" id="CHEBI:60344"/>
    </cofactor>
    <text evidence="3">Binds 2 heme b groups non-covalently.</text>
</comment>
<comment type="subunit">
    <text evidence="3">Fungal cytochrome b-c1 complex contains 10 subunits; 3 respiratory subunits, 2 core proteins and 5 low-molecular weight proteins. Cytochrome b-c1 complex is a homodimer.</text>
</comment>
<comment type="subcellular location">
    <subcellularLocation>
        <location evidence="3">Mitochondrion inner membrane</location>
        <topology evidence="3">Multi-pass membrane protein</topology>
    </subcellularLocation>
</comment>
<comment type="miscellaneous">
    <text evidence="1">Heme 1 (or BL or b562) is low-potential and absorbs at about 562 nm, and heme 2 (or BH or b566) is high-potential and absorbs at about 566 nm.</text>
</comment>
<comment type="similarity">
    <text evidence="4 5">Belongs to the cytochrome b family.</text>
</comment>
<comment type="caution">
    <text evidence="3">The protein contains only eight transmembrane helices, not nine as predicted by bioinformatics tools.</text>
</comment>
<sequence>WGATVITNLMSAIPWIGQDIVEFIWGGFSVNNATLNRFFALHFLLPFVLAALVIMHLIAMHDTVGSGNPLGISGNYDRLPFAPYFVFKDLVTIFIFFIVLSIFVFFMPNALGDSENYVMANPMQTPPAIVPEWYLLPFYA</sequence>
<keyword id="KW-0249">Electron transport</keyword>
<keyword id="KW-0349">Heme</keyword>
<keyword id="KW-0408">Iron</keyword>
<keyword id="KW-0472">Membrane</keyword>
<keyword id="KW-0479">Metal-binding</keyword>
<keyword id="KW-0496">Mitochondrion</keyword>
<keyword id="KW-0999">Mitochondrion inner membrane</keyword>
<keyword id="KW-0679">Respiratory chain</keyword>
<keyword id="KW-0812">Transmembrane</keyword>
<keyword id="KW-1133">Transmembrane helix</keyword>
<keyword id="KW-0813">Transport</keyword>
<keyword id="KW-0830">Ubiquinone</keyword>
<gene>
    <name type="primary">cob</name>
    <name type="synonym">cytB</name>
</gene>
<evidence type="ECO:0000250" key="1"/>
<evidence type="ECO:0000250" key="2">
    <source>
        <dbReference type="UniProtKB" id="P00157"/>
    </source>
</evidence>
<evidence type="ECO:0000250" key="3">
    <source>
        <dbReference type="UniProtKB" id="P00163"/>
    </source>
</evidence>
<evidence type="ECO:0000255" key="4">
    <source>
        <dbReference type="PROSITE-ProRule" id="PRU00967"/>
    </source>
</evidence>
<evidence type="ECO:0000255" key="5">
    <source>
        <dbReference type="PROSITE-ProRule" id="PRU00968"/>
    </source>
</evidence>
<protein>
    <recommendedName>
        <fullName>Cytochrome b</fullName>
    </recommendedName>
    <alternativeName>
        <fullName>Complex III subunit 3</fullName>
    </alternativeName>
    <alternativeName>
        <fullName>Complex III subunit III</fullName>
    </alternativeName>
    <alternativeName>
        <fullName>Cytochrome b-c1 complex subunit 3</fullName>
    </alternativeName>
    <alternativeName>
        <fullName>Ubiquinol-cytochrome-c reductase complex cytochrome b subunit</fullName>
    </alternativeName>
</protein>
<organism>
    <name type="scientific">Aspergillus terreus</name>
    <dbReference type="NCBI Taxonomy" id="33178"/>
    <lineage>
        <taxon>Eukaryota</taxon>
        <taxon>Fungi</taxon>
        <taxon>Dikarya</taxon>
        <taxon>Ascomycota</taxon>
        <taxon>Pezizomycotina</taxon>
        <taxon>Eurotiomycetes</taxon>
        <taxon>Eurotiomycetidae</taxon>
        <taxon>Eurotiales</taxon>
        <taxon>Aspergillaceae</taxon>
        <taxon>Aspergillus</taxon>
        <taxon>Aspergillus subgen. Circumdati</taxon>
    </lineage>
</organism>
<geneLocation type="mitochondrion"/>
<proteinExistence type="inferred from homology"/>
<dbReference type="EMBL" id="AB000579">
    <property type="protein sequence ID" value="BAA34146.1"/>
    <property type="molecule type" value="Genomic_DNA"/>
</dbReference>
<dbReference type="EMBL" id="AB000600">
    <property type="protein sequence ID" value="BAA34165.1"/>
    <property type="molecule type" value="Genomic_DNA"/>
</dbReference>
<dbReference type="EMBL" id="AB000601">
    <property type="protein sequence ID" value="BAA34166.1"/>
    <property type="molecule type" value="Genomic_DNA"/>
</dbReference>
<dbReference type="EMBL" id="AB000602">
    <property type="protein sequence ID" value="BAA34167.1"/>
    <property type="molecule type" value="Genomic_DNA"/>
</dbReference>
<dbReference type="EMBL" id="AB000603">
    <property type="protein sequence ID" value="BAA34168.1"/>
    <property type="molecule type" value="Genomic_DNA"/>
</dbReference>
<dbReference type="EMBL" id="AB025471">
    <property type="protein sequence ID" value="BAA95253.1"/>
    <property type="molecule type" value="Genomic_DNA"/>
</dbReference>
<dbReference type="SMR" id="P56631"/>
<dbReference type="GO" id="GO:0005743">
    <property type="term" value="C:mitochondrial inner membrane"/>
    <property type="evidence" value="ECO:0007669"/>
    <property type="project" value="UniProtKB-SubCell"/>
</dbReference>
<dbReference type="GO" id="GO:0046872">
    <property type="term" value="F:metal ion binding"/>
    <property type="evidence" value="ECO:0007669"/>
    <property type="project" value="UniProtKB-KW"/>
</dbReference>
<dbReference type="GO" id="GO:0008121">
    <property type="term" value="F:ubiquinol-cytochrome-c reductase activity"/>
    <property type="evidence" value="ECO:0007669"/>
    <property type="project" value="TreeGrafter"/>
</dbReference>
<dbReference type="GO" id="GO:0006122">
    <property type="term" value="P:mitochondrial electron transport, ubiquinol to cytochrome c"/>
    <property type="evidence" value="ECO:0007669"/>
    <property type="project" value="TreeGrafter"/>
</dbReference>
<dbReference type="Gene3D" id="1.20.810.10">
    <property type="entry name" value="Cytochrome Bc1 Complex, Chain C"/>
    <property type="match status" value="1"/>
</dbReference>
<dbReference type="InterPro" id="IPR005798">
    <property type="entry name" value="Cyt_b/b6_C"/>
</dbReference>
<dbReference type="InterPro" id="IPR036150">
    <property type="entry name" value="Cyt_b/b6_C_sf"/>
</dbReference>
<dbReference type="InterPro" id="IPR005797">
    <property type="entry name" value="Cyt_b/b6_N"/>
</dbReference>
<dbReference type="InterPro" id="IPR027387">
    <property type="entry name" value="Cytb/b6-like_sf"/>
</dbReference>
<dbReference type="InterPro" id="IPR016174">
    <property type="entry name" value="Di-haem_cyt_TM"/>
</dbReference>
<dbReference type="PANTHER" id="PTHR19271">
    <property type="entry name" value="CYTOCHROME B"/>
    <property type="match status" value="1"/>
</dbReference>
<dbReference type="PANTHER" id="PTHR19271:SF16">
    <property type="entry name" value="CYTOCHROME B"/>
    <property type="match status" value="1"/>
</dbReference>
<dbReference type="Pfam" id="PF00032">
    <property type="entry name" value="Cytochrom_B_C"/>
    <property type="match status" value="1"/>
</dbReference>
<dbReference type="Pfam" id="PF00033">
    <property type="entry name" value="Cytochrome_B"/>
    <property type="match status" value="1"/>
</dbReference>
<dbReference type="SUPFAM" id="SSF81648">
    <property type="entry name" value="a domain/subunit of cytochrome bc1 complex (Ubiquinol-cytochrome c reductase)"/>
    <property type="match status" value="1"/>
</dbReference>
<dbReference type="SUPFAM" id="SSF81342">
    <property type="entry name" value="Transmembrane di-heme cytochromes"/>
    <property type="match status" value="1"/>
</dbReference>
<dbReference type="PROSITE" id="PS51003">
    <property type="entry name" value="CYTB_CTER"/>
    <property type="match status" value="1"/>
</dbReference>
<dbReference type="PROSITE" id="PS51002">
    <property type="entry name" value="CYTB_NTER"/>
    <property type="match status" value="1"/>
</dbReference>
<name>CYB_ASPTE</name>